<feature type="chain" id="PRO_1000017256" description="5-methyltetrahydropteroyltriglutamate--homocysteine methyltransferase">
    <location>
        <begin position="1"/>
        <end position="759"/>
    </location>
</feature>
<feature type="region of interest" description="Disordered" evidence="2">
    <location>
        <begin position="1"/>
        <end position="22"/>
    </location>
</feature>
<feature type="compositionally biased region" description="Polar residues" evidence="2">
    <location>
        <begin position="1"/>
        <end position="16"/>
    </location>
</feature>
<feature type="active site" description="Proton donor" evidence="1">
    <location>
        <position position="700"/>
    </location>
</feature>
<feature type="binding site" evidence="1">
    <location>
        <begin position="24"/>
        <end position="27"/>
    </location>
    <ligand>
        <name>5-methyltetrahydropteroyltri-L-glutamate</name>
        <dbReference type="ChEBI" id="CHEBI:58207"/>
    </ligand>
</feature>
<feature type="binding site" evidence="1">
    <location>
        <position position="118"/>
    </location>
    <ligand>
        <name>5-methyltetrahydropteroyltri-L-glutamate</name>
        <dbReference type="ChEBI" id="CHEBI:58207"/>
    </ligand>
</feature>
<feature type="binding site" evidence="1">
    <location>
        <begin position="437"/>
        <end position="439"/>
    </location>
    <ligand>
        <name>L-homocysteine</name>
        <dbReference type="ChEBI" id="CHEBI:58199"/>
    </ligand>
</feature>
<feature type="binding site" evidence="1">
    <location>
        <begin position="437"/>
        <end position="439"/>
    </location>
    <ligand>
        <name>L-methionine</name>
        <dbReference type="ChEBI" id="CHEBI:57844"/>
    </ligand>
</feature>
<feature type="binding site" evidence="1">
    <location>
        <position position="490"/>
    </location>
    <ligand>
        <name>L-homocysteine</name>
        <dbReference type="ChEBI" id="CHEBI:58199"/>
    </ligand>
</feature>
<feature type="binding site" evidence="1">
    <location>
        <position position="490"/>
    </location>
    <ligand>
        <name>L-methionine</name>
        <dbReference type="ChEBI" id="CHEBI:57844"/>
    </ligand>
</feature>
<feature type="binding site" evidence="1">
    <location>
        <begin position="521"/>
        <end position="522"/>
    </location>
    <ligand>
        <name>5-methyltetrahydropteroyltri-L-glutamate</name>
        <dbReference type="ChEBI" id="CHEBI:58207"/>
    </ligand>
</feature>
<feature type="binding site" evidence="1">
    <location>
        <position position="567"/>
    </location>
    <ligand>
        <name>5-methyltetrahydropteroyltri-L-glutamate</name>
        <dbReference type="ChEBI" id="CHEBI:58207"/>
    </ligand>
</feature>
<feature type="binding site" evidence="1">
    <location>
        <position position="605"/>
    </location>
    <ligand>
        <name>L-homocysteine</name>
        <dbReference type="ChEBI" id="CHEBI:58199"/>
    </ligand>
</feature>
<feature type="binding site" evidence="1">
    <location>
        <position position="605"/>
    </location>
    <ligand>
        <name>L-methionine</name>
        <dbReference type="ChEBI" id="CHEBI:57844"/>
    </ligand>
</feature>
<feature type="binding site" evidence="1">
    <location>
        <position position="611"/>
    </location>
    <ligand>
        <name>5-methyltetrahydropteroyltri-L-glutamate</name>
        <dbReference type="ChEBI" id="CHEBI:58207"/>
    </ligand>
</feature>
<feature type="binding site" evidence="1">
    <location>
        <position position="647"/>
    </location>
    <ligand>
        <name>Zn(2+)</name>
        <dbReference type="ChEBI" id="CHEBI:29105"/>
        <note>catalytic</note>
    </ligand>
</feature>
<feature type="binding site" evidence="1">
    <location>
        <position position="649"/>
    </location>
    <ligand>
        <name>Zn(2+)</name>
        <dbReference type="ChEBI" id="CHEBI:29105"/>
        <note>catalytic</note>
    </ligand>
</feature>
<feature type="binding site" evidence="1">
    <location>
        <position position="671"/>
    </location>
    <ligand>
        <name>Zn(2+)</name>
        <dbReference type="ChEBI" id="CHEBI:29105"/>
        <note>catalytic</note>
    </ligand>
</feature>
<feature type="binding site" evidence="1">
    <location>
        <position position="732"/>
    </location>
    <ligand>
        <name>Zn(2+)</name>
        <dbReference type="ChEBI" id="CHEBI:29105"/>
        <note>catalytic</note>
    </ligand>
</feature>
<proteinExistence type="inferred from homology"/>
<accession>A5U1I0</accession>
<gene>
    <name evidence="1" type="primary">metE</name>
    <name type="ordered locus">MRA_1142</name>
</gene>
<keyword id="KW-0028">Amino-acid biosynthesis</keyword>
<keyword id="KW-0479">Metal-binding</keyword>
<keyword id="KW-0486">Methionine biosynthesis</keyword>
<keyword id="KW-0489">Methyltransferase</keyword>
<keyword id="KW-1185">Reference proteome</keyword>
<keyword id="KW-0677">Repeat</keyword>
<keyword id="KW-0808">Transferase</keyword>
<keyword id="KW-0862">Zinc</keyword>
<dbReference type="EC" id="2.1.1.14" evidence="1"/>
<dbReference type="EMBL" id="CP000611">
    <property type="protein sequence ID" value="ABQ72880.1"/>
    <property type="molecule type" value="Genomic_DNA"/>
</dbReference>
<dbReference type="RefSeq" id="WP_003405914.1">
    <property type="nucleotide sequence ID" value="NZ_CP016972.1"/>
</dbReference>
<dbReference type="SMR" id="A5U1I0"/>
<dbReference type="KEGG" id="mra:MRA_1142"/>
<dbReference type="eggNOG" id="COG0620">
    <property type="taxonomic scope" value="Bacteria"/>
</dbReference>
<dbReference type="HOGENOM" id="CLU_013175_0_0_11"/>
<dbReference type="UniPathway" id="UPA00051">
    <property type="reaction ID" value="UER00082"/>
</dbReference>
<dbReference type="Proteomes" id="UP000001988">
    <property type="component" value="Chromosome"/>
</dbReference>
<dbReference type="GO" id="GO:0003871">
    <property type="term" value="F:5-methyltetrahydropteroyltriglutamate-homocysteine S-methyltransferase activity"/>
    <property type="evidence" value="ECO:0007669"/>
    <property type="project" value="UniProtKB-UniRule"/>
</dbReference>
<dbReference type="GO" id="GO:0008270">
    <property type="term" value="F:zinc ion binding"/>
    <property type="evidence" value="ECO:0007669"/>
    <property type="project" value="InterPro"/>
</dbReference>
<dbReference type="GO" id="GO:0009086">
    <property type="term" value="P:methionine biosynthetic process"/>
    <property type="evidence" value="ECO:0007669"/>
    <property type="project" value="UniProtKB-UniRule"/>
</dbReference>
<dbReference type="GO" id="GO:0032259">
    <property type="term" value="P:methylation"/>
    <property type="evidence" value="ECO:0007669"/>
    <property type="project" value="UniProtKB-KW"/>
</dbReference>
<dbReference type="CDD" id="cd03311">
    <property type="entry name" value="CIMS_C_terminal_like"/>
    <property type="match status" value="1"/>
</dbReference>
<dbReference type="CDD" id="cd03312">
    <property type="entry name" value="CIMS_N_terminal_like"/>
    <property type="match status" value="1"/>
</dbReference>
<dbReference type="Gene3D" id="3.20.20.210">
    <property type="match status" value="2"/>
</dbReference>
<dbReference type="HAMAP" id="MF_00172">
    <property type="entry name" value="Meth_synth"/>
    <property type="match status" value="1"/>
</dbReference>
<dbReference type="InterPro" id="IPR013215">
    <property type="entry name" value="Cbl-indep_Met_Synth_N"/>
</dbReference>
<dbReference type="InterPro" id="IPR006276">
    <property type="entry name" value="Cobalamin-indep_Met_synthase"/>
</dbReference>
<dbReference type="InterPro" id="IPR002629">
    <property type="entry name" value="Met_Synth_C/arc"/>
</dbReference>
<dbReference type="InterPro" id="IPR038071">
    <property type="entry name" value="UROD/MetE-like_sf"/>
</dbReference>
<dbReference type="NCBIfam" id="TIGR01371">
    <property type="entry name" value="met_syn_B12ind"/>
    <property type="match status" value="1"/>
</dbReference>
<dbReference type="NCBIfam" id="NF003556">
    <property type="entry name" value="PRK05222.1"/>
    <property type="match status" value="1"/>
</dbReference>
<dbReference type="PANTHER" id="PTHR30519">
    <property type="entry name" value="5-METHYLTETRAHYDROPTEROYLTRIGLUTAMATE--HOMOCYSTEINE METHYLTRANSFERASE"/>
    <property type="match status" value="1"/>
</dbReference>
<dbReference type="Pfam" id="PF08267">
    <property type="entry name" value="Meth_synt_1"/>
    <property type="match status" value="1"/>
</dbReference>
<dbReference type="Pfam" id="PF01717">
    <property type="entry name" value="Meth_synt_2"/>
    <property type="match status" value="1"/>
</dbReference>
<dbReference type="PIRSF" id="PIRSF000382">
    <property type="entry name" value="MeTrfase_B12_ind"/>
    <property type="match status" value="1"/>
</dbReference>
<dbReference type="SUPFAM" id="SSF51726">
    <property type="entry name" value="UROD/MetE-like"/>
    <property type="match status" value="2"/>
</dbReference>
<protein>
    <recommendedName>
        <fullName evidence="1">5-methyltetrahydropteroyltriglutamate--homocysteine methyltransferase</fullName>
        <ecNumber evidence="1">2.1.1.14</ecNumber>
    </recommendedName>
    <alternativeName>
        <fullName evidence="1">Cobalamin-independent methionine synthase</fullName>
    </alternativeName>
    <alternativeName>
        <fullName evidence="1">Methionine synthase, vitamin-B12 independent isozyme</fullName>
    </alternativeName>
</protein>
<organism>
    <name type="scientific">Mycobacterium tuberculosis (strain ATCC 25177 / H37Ra)</name>
    <dbReference type="NCBI Taxonomy" id="419947"/>
    <lineage>
        <taxon>Bacteria</taxon>
        <taxon>Bacillati</taxon>
        <taxon>Actinomycetota</taxon>
        <taxon>Actinomycetes</taxon>
        <taxon>Mycobacteriales</taxon>
        <taxon>Mycobacteriaceae</taxon>
        <taxon>Mycobacterium</taxon>
        <taxon>Mycobacterium tuberculosis complex</taxon>
    </lineage>
</organism>
<evidence type="ECO:0000255" key="1">
    <source>
        <dbReference type="HAMAP-Rule" id="MF_00172"/>
    </source>
</evidence>
<evidence type="ECO:0000256" key="2">
    <source>
        <dbReference type="SAM" id="MobiDB-lite"/>
    </source>
</evidence>
<name>METE_MYCTA</name>
<sequence length="759" mass="81582">MTQPVRRQPFTATITGSPRIGPRRELKRATEGYWAGRTSRSELEAVAATLRRDTWSALAAAGLDSVPVNTFSYYDQMLDTAVLLGALPPRVSPVSDGLDRYFAAARGTDQIAPLEMTKWFDTNYHYLVPEIGPSTTFTLHPGKVLAELKEALGQGIPARPVIIGPITFLLLSKAVDGAGAPIERLEELVPVYSELLSLLADGGAQWVQFDEPALVTDLSPDAPALAEAVYTALCSVSNRPAIYVATYFGDPGAALPALARTPVEAIGVDLVAGADTSVAGVPELAGKTLVAGVVDGRNVWRTDLEAALGTLATLLGSAATVAVSTSCSTLHVPYSLEPETDLDDALRSWLAFGAEKVREVVVLARALRDGHDAVADEIASSRAAIASRKRDPRLHNGQIRARIEAIVASGAHRGNAAQRRASQDARLHLPPLPTTTIGSYPQTSAIRVARAALRAGEIDEAEYVRRMRQEITEVIALQERLGLDVLVHGEPERNDMVQYFAEQLAGFFATQNGWVQSYGSRCVRPPILYGDVSRPRAMTVEWITYAQSLTDKPVKGMLTGPVTILAWSFVRDDQPLADTANQVALAIRDETVDLQSAGIAVIQVDEPALRELLPLRRADQAEYLRWAVGAFRLATSGVSDATQIHTHLCYSEFGEVIGAIADLDADVTSIEAARSHMEVLDDLNAIGFANGVGPGVYDIHSPRVPSAEEMADSLRAALRAVPAERLWVNPDCGLKTRNVDEVTASLHNMVAAAREVRAG</sequence>
<reference key="1">
    <citation type="journal article" date="2008" name="PLoS ONE">
        <title>Genetic basis of virulence attenuation revealed by comparative genomic analysis of Mycobacterium tuberculosis strain H37Ra versus H37Rv.</title>
        <authorList>
            <person name="Zheng H."/>
            <person name="Lu L."/>
            <person name="Wang B."/>
            <person name="Pu S."/>
            <person name="Zhang X."/>
            <person name="Zhu G."/>
            <person name="Shi W."/>
            <person name="Zhang L."/>
            <person name="Wang H."/>
            <person name="Wang S."/>
            <person name="Zhao G."/>
            <person name="Zhang Y."/>
        </authorList>
    </citation>
    <scope>NUCLEOTIDE SEQUENCE [LARGE SCALE GENOMIC DNA]</scope>
    <source>
        <strain>ATCC 25177 / H37Ra</strain>
    </source>
</reference>
<comment type="function">
    <text evidence="1">Catalyzes the transfer of a methyl group from 5-methyltetrahydrofolate to homocysteine resulting in methionine formation.</text>
</comment>
<comment type="catalytic activity">
    <reaction evidence="1">
        <text>5-methyltetrahydropteroyltri-L-glutamate + L-homocysteine = tetrahydropteroyltri-L-glutamate + L-methionine</text>
        <dbReference type="Rhea" id="RHEA:21196"/>
        <dbReference type="ChEBI" id="CHEBI:57844"/>
        <dbReference type="ChEBI" id="CHEBI:58140"/>
        <dbReference type="ChEBI" id="CHEBI:58199"/>
        <dbReference type="ChEBI" id="CHEBI:58207"/>
        <dbReference type="EC" id="2.1.1.14"/>
    </reaction>
</comment>
<comment type="cofactor">
    <cofactor evidence="1">
        <name>Zn(2+)</name>
        <dbReference type="ChEBI" id="CHEBI:29105"/>
    </cofactor>
    <text evidence="1">Binds 1 zinc ion per subunit.</text>
</comment>
<comment type="pathway">
    <text evidence="1">Amino-acid biosynthesis; L-methionine biosynthesis via de novo pathway; L-methionine from L-homocysteine (MetE route): step 1/1.</text>
</comment>
<comment type="similarity">
    <text evidence="1">Belongs to the vitamin-B12 independent methionine synthase family.</text>
</comment>